<gene>
    <name evidence="1" type="primary">fosB</name>
    <name type="ordered locus">BH1778</name>
</gene>
<protein>
    <recommendedName>
        <fullName evidence="1">Metallothiol transferase FosB</fullName>
        <ecNumber evidence="1">2.5.1.-</ecNumber>
    </recommendedName>
    <alternativeName>
        <fullName evidence="1">Fosfomycin resistance protein</fullName>
    </alternativeName>
</protein>
<accession>Q9KBZ6</accession>
<dbReference type="EC" id="2.5.1.-" evidence="1"/>
<dbReference type="EMBL" id="BA000004">
    <property type="protein sequence ID" value="BAB05497.1"/>
    <property type="molecule type" value="Genomic_DNA"/>
</dbReference>
<dbReference type="PIR" id="B83872">
    <property type="entry name" value="B83872"/>
</dbReference>
<dbReference type="RefSeq" id="WP_010897939.1">
    <property type="nucleotide sequence ID" value="NC_002570.2"/>
</dbReference>
<dbReference type="SMR" id="Q9KBZ6"/>
<dbReference type="STRING" id="272558.gene:10727676"/>
<dbReference type="GeneID" id="87597388"/>
<dbReference type="KEGG" id="bha:BH1778"/>
<dbReference type="eggNOG" id="COG0346">
    <property type="taxonomic scope" value="Bacteria"/>
</dbReference>
<dbReference type="HOGENOM" id="CLU_121356_0_0_9"/>
<dbReference type="OrthoDB" id="192739at2"/>
<dbReference type="Proteomes" id="UP000001258">
    <property type="component" value="Chromosome"/>
</dbReference>
<dbReference type="GO" id="GO:0005737">
    <property type="term" value="C:cytoplasm"/>
    <property type="evidence" value="ECO:0007669"/>
    <property type="project" value="UniProtKB-SubCell"/>
</dbReference>
<dbReference type="GO" id="GO:0000287">
    <property type="term" value="F:magnesium ion binding"/>
    <property type="evidence" value="ECO:0007669"/>
    <property type="project" value="UniProtKB-UniRule"/>
</dbReference>
<dbReference type="GO" id="GO:0016765">
    <property type="term" value="F:transferase activity, transferring alkyl or aryl (other than methyl) groups"/>
    <property type="evidence" value="ECO:0007669"/>
    <property type="project" value="UniProtKB-UniRule"/>
</dbReference>
<dbReference type="GO" id="GO:0046677">
    <property type="term" value="P:response to antibiotic"/>
    <property type="evidence" value="ECO:0007669"/>
    <property type="project" value="UniProtKB-UniRule"/>
</dbReference>
<dbReference type="Gene3D" id="3.10.180.10">
    <property type="entry name" value="2,3-Dihydroxybiphenyl 1,2-Dioxygenase, domain 1"/>
    <property type="match status" value="1"/>
</dbReference>
<dbReference type="HAMAP" id="MF_01512">
    <property type="entry name" value="FosB"/>
    <property type="match status" value="1"/>
</dbReference>
<dbReference type="InterPro" id="IPR051332">
    <property type="entry name" value="Fosfomycin_Res_Enzymes"/>
</dbReference>
<dbReference type="InterPro" id="IPR029068">
    <property type="entry name" value="Glyas_Bleomycin-R_OHBP_Dase"/>
</dbReference>
<dbReference type="InterPro" id="IPR004360">
    <property type="entry name" value="Glyas_Fos-R_dOase_dom"/>
</dbReference>
<dbReference type="InterPro" id="IPR022858">
    <property type="entry name" value="Metallothiol_Trafse_FosB"/>
</dbReference>
<dbReference type="InterPro" id="IPR037523">
    <property type="entry name" value="VOC"/>
</dbReference>
<dbReference type="NCBIfam" id="NF003152">
    <property type="entry name" value="PRK04101.1"/>
    <property type="match status" value="1"/>
</dbReference>
<dbReference type="PANTHER" id="PTHR36113:SF6">
    <property type="entry name" value="FOSFOMYCIN RESISTANCE PROTEIN FOSX"/>
    <property type="match status" value="1"/>
</dbReference>
<dbReference type="PANTHER" id="PTHR36113">
    <property type="entry name" value="LYASE, PUTATIVE-RELATED-RELATED"/>
    <property type="match status" value="1"/>
</dbReference>
<dbReference type="Pfam" id="PF00903">
    <property type="entry name" value="Glyoxalase"/>
    <property type="match status" value="1"/>
</dbReference>
<dbReference type="SUPFAM" id="SSF54593">
    <property type="entry name" value="Glyoxalase/Bleomycin resistance protein/Dihydroxybiphenyl dioxygenase"/>
    <property type="match status" value="1"/>
</dbReference>
<dbReference type="PROSITE" id="PS51819">
    <property type="entry name" value="VOC"/>
    <property type="match status" value="1"/>
</dbReference>
<feature type="chain" id="PRO_0000164028" description="Metallothiol transferase FosB">
    <location>
        <begin position="1"/>
        <end position="141"/>
    </location>
</feature>
<feature type="domain" description="VOC" evidence="2">
    <location>
        <begin position="5"/>
        <end position="120"/>
    </location>
</feature>
<feature type="active site" description="Proton donor/acceptor" evidence="2">
    <location>
        <position position="116"/>
    </location>
</feature>
<feature type="binding site" evidence="1">
    <location>
        <position position="8"/>
    </location>
    <ligand>
        <name>Mg(2+)</name>
        <dbReference type="ChEBI" id="CHEBI:18420"/>
    </ligand>
</feature>
<feature type="binding site" evidence="1">
    <location>
        <position position="67"/>
    </location>
    <ligand>
        <name>Mg(2+)</name>
        <dbReference type="ChEBI" id="CHEBI:18420"/>
    </ligand>
</feature>
<feature type="binding site" evidence="1">
    <location>
        <position position="116"/>
    </location>
    <ligand>
        <name>Mg(2+)</name>
        <dbReference type="ChEBI" id="CHEBI:18420"/>
    </ligand>
</feature>
<name>FOSB_HALH5</name>
<proteinExistence type="inferred from homology"/>
<evidence type="ECO:0000255" key="1">
    <source>
        <dbReference type="HAMAP-Rule" id="MF_01512"/>
    </source>
</evidence>
<evidence type="ECO:0000255" key="2">
    <source>
        <dbReference type="PROSITE-ProRule" id="PRU01163"/>
    </source>
</evidence>
<sequence>MRIQGINHLLFSVKCLERSIEFYKKALGAKLLVKGRTTAYFDLQGIWLALNEEPDIPRNEIHQSYTHIAFTVGEEEMEEAYERLAGLGVNILKGRPRDPRDRQSIYFTDPDGHKFEFHCGTLNDRLDYYREAKPHMTFFDD</sequence>
<keyword id="KW-0046">Antibiotic resistance</keyword>
<keyword id="KW-0963">Cytoplasm</keyword>
<keyword id="KW-0460">Magnesium</keyword>
<keyword id="KW-0479">Metal-binding</keyword>
<keyword id="KW-1185">Reference proteome</keyword>
<keyword id="KW-0808">Transferase</keyword>
<organism>
    <name type="scientific">Halalkalibacterium halodurans (strain ATCC BAA-125 / DSM 18197 / FERM 7344 / JCM 9153 / C-125)</name>
    <name type="common">Bacillus halodurans</name>
    <dbReference type="NCBI Taxonomy" id="272558"/>
    <lineage>
        <taxon>Bacteria</taxon>
        <taxon>Bacillati</taxon>
        <taxon>Bacillota</taxon>
        <taxon>Bacilli</taxon>
        <taxon>Bacillales</taxon>
        <taxon>Bacillaceae</taxon>
        <taxon>Halalkalibacterium (ex Joshi et al. 2022)</taxon>
    </lineage>
</organism>
<comment type="function">
    <text evidence="1">Metallothiol transferase which confers resistance to fosfomycin by catalyzing the addition of a thiol cofactor to fosfomycin. L-cysteine is probably the physiological thiol donor.</text>
</comment>
<comment type="cofactor">
    <cofactor evidence="1">
        <name>Mg(2+)</name>
        <dbReference type="ChEBI" id="CHEBI:18420"/>
    </cofactor>
</comment>
<comment type="subunit">
    <text evidence="1">Homodimer.</text>
</comment>
<comment type="subcellular location">
    <subcellularLocation>
        <location evidence="1">Cytoplasm</location>
    </subcellularLocation>
</comment>
<comment type="similarity">
    <text evidence="1">Belongs to the fosfomycin resistance protein family. FosB subfamily.</text>
</comment>
<reference key="1">
    <citation type="journal article" date="2000" name="Nucleic Acids Res.">
        <title>Complete genome sequence of the alkaliphilic bacterium Bacillus halodurans and genomic sequence comparison with Bacillus subtilis.</title>
        <authorList>
            <person name="Takami H."/>
            <person name="Nakasone K."/>
            <person name="Takaki Y."/>
            <person name="Maeno G."/>
            <person name="Sasaki R."/>
            <person name="Masui N."/>
            <person name="Fuji F."/>
            <person name="Hirama C."/>
            <person name="Nakamura Y."/>
            <person name="Ogasawara N."/>
            <person name="Kuhara S."/>
            <person name="Horikoshi K."/>
        </authorList>
    </citation>
    <scope>NUCLEOTIDE SEQUENCE [LARGE SCALE GENOMIC DNA]</scope>
    <source>
        <strain>ATCC BAA-125 / DSM 18197 / FERM 7344 / JCM 9153 / C-125</strain>
    </source>
</reference>